<sequence>MTSTQRTLMVMAGGTGGHVFPGLAVAHRMQAQGWRVVWLGNPAGMEATLVPRHGIPMEYVRFGGLRGKGLATKFALPFNLLRACAQSLRALRRVKPDVVLGMGGYITFPAGLVTVLTGRPLVLHEQNSIAGLTNKVLAKLAKRVLVAFPGALPNAEWTGNPIRTELARTEPPQARYAARSGKLRLLVVGGSLGAAALNEVVPRALALLAPDERPQVVHQAGAKHIDTLKENYEAAGLSCGSDVALVPFIDDMASAYANADLVICRSGAMTVAEIAAVGVAALFVPFPHAVDDHQTTNAEFLAEQGAAVLVQQRDLSAELLADWLRGQSRDSLAAMAERSRSLAKPDATDEVARVCAAVAGANLEGKQ</sequence>
<gene>
    <name evidence="1" type="primary">murG</name>
    <name type="ordered locus">BMA10247_3232</name>
</gene>
<feature type="chain" id="PRO_1000002624" description="UDP-N-acetylglucosamine--N-acetylmuramyl-(pentapeptide) pyrophosphoryl-undecaprenol N-acetylglucosamine transferase">
    <location>
        <begin position="1"/>
        <end position="367"/>
    </location>
</feature>
<feature type="binding site" evidence="1">
    <location>
        <begin position="15"/>
        <end position="17"/>
    </location>
    <ligand>
        <name>UDP-N-acetyl-alpha-D-glucosamine</name>
        <dbReference type="ChEBI" id="CHEBI:57705"/>
    </ligand>
</feature>
<feature type="binding site" evidence="1">
    <location>
        <position position="127"/>
    </location>
    <ligand>
        <name>UDP-N-acetyl-alpha-D-glucosamine</name>
        <dbReference type="ChEBI" id="CHEBI:57705"/>
    </ligand>
</feature>
<feature type="binding site" evidence="1">
    <location>
        <position position="163"/>
    </location>
    <ligand>
        <name>UDP-N-acetyl-alpha-D-glucosamine</name>
        <dbReference type="ChEBI" id="CHEBI:57705"/>
    </ligand>
</feature>
<feature type="binding site" evidence="1">
    <location>
        <position position="191"/>
    </location>
    <ligand>
        <name>UDP-N-acetyl-alpha-D-glucosamine</name>
        <dbReference type="ChEBI" id="CHEBI:57705"/>
    </ligand>
</feature>
<feature type="binding site" evidence="1">
    <location>
        <position position="249"/>
    </location>
    <ligand>
        <name>UDP-N-acetyl-alpha-D-glucosamine</name>
        <dbReference type="ChEBI" id="CHEBI:57705"/>
    </ligand>
</feature>
<feature type="binding site" evidence="1">
    <location>
        <position position="294"/>
    </location>
    <ligand>
        <name>UDP-N-acetyl-alpha-D-glucosamine</name>
        <dbReference type="ChEBI" id="CHEBI:57705"/>
    </ligand>
</feature>
<protein>
    <recommendedName>
        <fullName evidence="1">UDP-N-acetylglucosamine--N-acetylmuramyl-(pentapeptide) pyrophosphoryl-undecaprenol N-acetylglucosamine transferase</fullName>
        <ecNumber evidence="1">2.4.1.227</ecNumber>
    </recommendedName>
    <alternativeName>
        <fullName evidence="1">Undecaprenyl-PP-MurNAc-pentapeptide-UDPGlcNAc GlcNAc transferase</fullName>
    </alternativeName>
</protein>
<accession>A3MR63</accession>
<reference key="1">
    <citation type="journal article" date="2010" name="Genome Biol. Evol.">
        <title>Continuing evolution of Burkholderia mallei through genome reduction and large-scale rearrangements.</title>
        <authorList>
            <person name="Losada L."/>
            <person name="Ronning C.M."/>
            <person name="DeShazer D."/>
            <person name="Woods D."/>
            <person name="Fedorova N."/>
            <person name="Kim H.S."/>
            <person name="Shabalina S.A."/>
            <person name="Pearson T.R."/>
            <person name="Brinkac L."/>
            <person name="Tan P."/>
            <person name="Nandi T."/>
            <person name="Crabtree J."/>
            <person name="Badger J."/>
            <person name="Beckstrom-Sternberg S."/>
            <person name="Saqib M."/>
            <person name="Schutzer S.E."/>
            <person name="Keim P."/>
            <person name="Nierman W.C."/>
        </authorList>
    </citation>
    <scope>NUCLEOTIDE SEQUENCE [LARGE SCALE GENOMIC DNA]</scope>
    <source>
        <strain>NCTC 10247</strain>
    </source>
</reference>
<evidence type="ECO:0000255" key="1">
    <source>
        <dbReference type="HAMAP-Rule" id="MF_00033"/>
    </source>
</evidence>
<dbReference type="EC" id="2.4.1.227" evidence="1"/>
<dbReference type="EMBL" id="CP000548">
    <property type="protein sequence ID" value="ABO05016.1"/>
    <property type="molecule type" value="Genomic_DNA"/>
</dbReference>
<dbReference type="RefSeq" id="WP_004194182.1">
    <property type="nucleotide sequence ID" value="NZ_CP007802.1"/>
</dbReference>
<dbReference type="SMR" id="A3MR63"/>
<dbReference type="CAZy" id="GT28">
    <property type="family name" value="Glycosyltransferase Family 28"/>
</dbReference>
<dbReference type="GeneID" id="93061627"/>
<dbReference type="KEGG" id="bmaz:BM44_137"/>
<dbReference type="KEGG" id="bmn:BMA10247_3232"/>
<dbReference type="PATRIC" id="fig|320389.8.peg.146"/>
<dbReference type="UniPathway" id="UPA00219"/>
<dbReference type="GO" id="GO:0005886">
    <property type="term" value="C:plasma membrane"/>
    <property type="evidence" value="ECO:0007669"/>
    <property type="project" value="UniProtKB-SubCell"/>
</dbReference>
<dbReference type="GO" id="GO:0051991">
    <property type="term" value="F:UDP-N-acetyl-D-glucosamine:N-acetylmuramoyl-L-alanyl-D-glutamyl-meso-2,6-diaminopimelyl-D-alanyl-D-alanine-diphosphoundecaprenol 4-beta-N-acetylglucosaminlytransferase activity"/>
    <property type="evidence" value="ECO:0007669"/>
    <property type="project" value="RHEA"/>
</dbReference>
<dbReference type="GO" id="GO:0050511">
    <property type="term" value="F:undecaprenyldiphospho-muramoylpentapeptide beta-N-acetylglucosaminyltransferase activity"/>
    <property type="evidence" value="ECO:0007669"/>
    <property type="project" value="UniProtKB-UniRule"/>
</dbReference>
<dbReference type="GO" id="GO:0005975">
    <property type="term" value="P:carbohydrate metabolic process"/>
    <property type="evidence" value="ECO:0007669"/>
    <property type="project" value="InterPro"/>
</dbReference>
<dbReference type="GO" id="GO:0051301">
    <property type="term" value="P:cell division"/>
    <property type="evidence" value="ECO:0007669"/>
    <property type="project" value="UniProtKB-KW"/>
</dbReference>
<dbReference type="GO" id="GO:0071555">
    <property type="term" value="P:cell wall organization"/>
    <property type="evidence" value="ECO:0007669"/>
    <property type="project" value="UniProtKB-KW"/>
</dbReference>
<dbReference type="GO" id="GO:0030259">
    <property type="term" value="P:lipid glycosylation"/>
    <property type="evidence" value="ECO:0007669"/>
    <property type="project" value="UniProtKB-UniRule"/>
</dbReference>
<dbReference type="GO" id="GO:0009252">
    <property type="term" value="P:peptidoglycan biosynthetic process"/>
    <property type="evidence" value="ECO:0007669"/>
    <property type="project" value="UniProtKB-UniRule"/>
</dbReference>
<dbReference type="GO" id="GO:0008360">
    <property type="term" value="P:regulation of cell shape"/>
    <property type="evidence" value="ECO:0007669"/>
    <property type="project" value="UniProtKB-KW"/>
</dbReference>
<dbReference type="CDD" id="cd03785">
    <property type="entry name" value="GT28_MurG"/>
    <property type="match status" value="1"/>
</dbReference>
<dbReference type="Gene3D" id="3.40.50.2000">
    <property type="entry name" value="Glycogen Phosphorylase B"/>
    <property type="match status" value="2"/>
</dbReference>
<dbReference type="HAMAP" id="MF_00033">
    <property type="entry name" value="MurG"/>
    <property type="match status" value="1"/>
</dbReference>
<dbReference type="InterPro" id="IPR006009">
    <property type="entry name" value="GlcNAc_MurG"/>
</dbReference>
<dbReference type="InterPro" id="IPR007235">
    <property type="entry name" value="Glyco_trans_28_C"/>
</dbReference>
<dbReference type="InterPro" id="IPR004276">
    <property type="entry name" value="GlycoTrans_28_N"/>
</dbReference>
<dbReference type="NCBIfam" id="TIGR01133">
    <property type="entry name" value="murG"/>
    <property type="match status" value="1"/>
</dbReference>
<dbReference type="PANTHER" id="PTHR21015:SF22">
    <property type="entry name" value="GLYCOSYLTRANSFERASE"/>
    <property type="match status" value="1"/>
</dbReference>
<dbReference type="PANTHER" id="PTHR21015">
    <property type="entry name" value="UDP-N-ACETYLGLUCOSAMINE--N-ACETYLMURAMYL-(PENTAPEPTIDE) PYROPHOSPHORYL-UNDECAPRENOL N-ACETYLGLUCOSAMINE TRANSFERASE 1"/>
    <property type="match status" value="1"/>
</dbReference>
<dbReference type="Pfam" id="PF04101">
    <property type="entry name" value="Glyco_tran_28_C"/>
    <property type="match status" value="1"/>
</dbReference>
<dbReference type="Pfam" id="PF03033">
    <property type="entry name" value="Glyco_transf_28"/>
    <property type="match status" value="1"/>
</dbReference>
<dbReference type="SUPFAM" id="SSF53756">
    <property type="entry name" value="UDP-Glycosyltransferase/glycogen phosphorylase"/>
    <property type="match status" value="1"/>
</dbReference>
<proteinExistence type="inferred from homology"/>
<name>MURG_BURM7</name>
<comment type="function">
    <text evidence="1">Cell wall formation. Catalyzes the transfer of a GlcNAc subunit on undecaprenyl-pyrophosphoryl-MurNAc-pentapeptide (lipid intermediate I) to form undecaprenyl-pyrophosphoryl-MurNAc-(pentapeptide)GlcNAc (lipid intermediate II).</text>
</comment>
<comment type="catalytic activity">
    <reaction evidence="1">
        <text>di-trans,octa-cis-undecaprenyl diphospho-N-acetyl-alpha-D-muramoyl-L-alanyl-D-glutamyl-meso-2,6-diaminopimeloyl-D-alanyl-D-alanine + UDP-N-acetyl-alpha-D-glucosamine = di-trans,octa-cis-undecaprenyl diphospho-[N-acetyl-alpha-D-glucosaminyl-(1-&gt;4)]-N-acetyl-alpha-D-muramoyl-L-alanyl-D-glutamyl-meso-2,6-diaminopimeloyl-D-alanyl-D-alanine + UDP + H(+)</text>
        <dbReference type="Rhea" id="RHEA:31227"/>
        <dbReference type="ChEBI" id="CHEBI:15378"/>
        <dbReference type="ChEBI" id="CHEBI:57705"/>
        <dbReference type="ChEBI" id="CHEBI:58223"/>
        <dbReference type="ChEBI" id="CHEBI:61387"/>
        <dbReference type="ChEBI" id="CHEBI:61388"/>
        <dbReference type="EC" id="2.4.1.227"/>
    </reaction>
</comment>
<comment type="pathway">
    <text evidence="1">Cell wall biogenesis; peptidoglycan biosynthesis.</text>
</comment>
<comment type="subcellular location">
    <subcellularLocation>
        <location evidence="1">Cell inner membrane</location>
        <topology evidence="1">Peripheral membrane protein</topology>
        <orientation evidence="1">Cytoplasmic side</orientation>
    </subcellularLocation>
</comment>
<comment type="similarity">
    <text evidence="1">Belongs to the glycosyltransferase 28 family. MurG subfamily.</text>
</comment>
<keyword id="KW-0131">Cell cycle</keyword>
<keyword id="KW-0132">Cell division</keyword>
<keyword id="KW-0997">Cell inner membrane</keyword>
<keyword id="KW-1003">Cell membrane</keyword>
<keyword id="KW-0133">Cell shape</keyword>
<keyword id="KW-0961">Cell wall biogenesis/degradation</keyword>
<keyword id="KW-0328">Glycosyltransferase</keyword>
<keyword id="KW-0472">Membrane</keyword>
<keyword id="KW-0573">Peptidoglycan synthesis</keyword>
<keyword id="KW-0808">Transferase</keyword>
<organism>
    <name type="scientific">Burkholderia mallei (strain NCTC 10247)</name>
    <dbReference type="NCBI Taxonomy" id="320389"/>
    <lineage>
        <taxon>Bacteria</taxon>
        <taxon>Pseudomonadati</taxon>
        <taxon>Pseudomonadota</taxon>
        <taxon>Betaproteobacteria</taxon>
        <taxon>Burkholderiales</taxon>
        <taxon>Burkholderiaceae</taxon>
        <taxon>Burkholderia</taxon>
        <taxon>pseudomallei group</taxon>
    </lineage>
</organism>